<feature type="chain" id="PRO_1000089482" description="Octanoyltransferase">
    <location>
        <begin position="1"/>
        <end position="232"/>
    </location>
</feature>
<feature type="domain" description="BPL/LPL catalytic" evidence="2">
    <location>
        <begin position="44"/>
        <end position="219"/>
    </location>
</feature>
<feature type="active site" description="Acyl-thioester intermediate" evidence="1">
    <location>
        <position position="181"/>
    </location>
</feature>
<feature type="binding site" evidence="1">
    <location>
        <begin position="83"/>
        <end position="90"/>
    </location>
    <ligand>
        <name>substrate</name>
    </ligand>
</feature>
<feature type="binding site" evidence="1">
    <location>
        <begin position="150"/>
        <end position="152"/>
    </location>
    <ligand>
        <name>substrate</name>
    </ligand>
</feature>
<feature type="binding site" evidence="1">
    <location>
        <begin position="163"/>
        <end position="165"/>
    </location>
    <ligand>
        <name>substrate</name>
    </ligand>
</feature>
<feature type="site" description="Lowers pKa of active site Cys" evidence="1">
    <location>
        <position position="147"/>
    </location>
</feature>
<keyword id="KW-0012">Acyltransferase</keyword>
<keyword id="KW-0963">Cytoplasm</keyword>
<keyword id="KW-0808">Transferase</keyword>
<name>LIPB_XANCB</name>
<reference key="1">
    <citation type="journal article" date="2008" name="J. Biotechnol.">
        <title>The genome of Xanthomonas campestris pv. campestris B100 and its use for the reconstruction of metabolic pathways involved in xanthan biosynthesis.</title>
        <authorList>
            <person name="Vorhoelter F.-J."/>
            <person name="Schneiker S."/>
            <person name="Goesmann A."/>
            <person name="Krause L."/>
            <person name="Bekel T."/>
            <person name="Kaiser O."/>
            <person name="Linke B."/>
            <person name="Patschkowski T."/>
            <person name="Rueckert C."/>
            <person name="Schmid J."/>
            <person name="Sidhu V.K."/>
            <person name="Sieber V."/>
            <person name="Tauch A."/>
            <person name="Watt S.A."/>
            <person name="Weisshaar B."/>
            <person name="Becker A."/>
            <person name="Niehaus K."/>
            <person name="Puehler A."/>
        </authorList>
    </citation>
    <scope>NUCLEOTIDE SEQUENCE [LARGE SCALE GENOMIC DNA]</scope>
    <source>
        <strain>B100</strain>
    </source>
</reference>
<evidence type="ECO:0000255" key="1">
    <source>
        <dbReference type="HAMAP-Rule" id="MF_00013"/>
    </source>
</evidence>
<evidence type="ECO:0000255" key="2">
    <source>
        <dbReference type="PROSITE-ProRule" id="PRU01067"/>
    </source>
</evidence>
<protein>
    <recommendedName>
        <fullName evidence="1">Octanoyltransferase</fullName>
        <ecNumber evidence="1">2.3.1.181</ecNumber>
    </recommendedName>
    <alternativeName>
        <fullName evidence="1">Lipoate-protein ligase B</fullName>
    </alternativeName>
    <alternativeName>
        <fullName evidence="1">Lipoyl/octanoyl transferase</fullName>
    </alternativeName>
    <alternativeName>
        <fullName evidence="1">Octanoyl-[acyl-carrier-protein]-protein N-octanoyltransferase</fullName>
    </alternativeName>
</protein>
<proteinExistence type="inferred from homology"/>
<dbReference type="EC" id="2.3.1.181" evidence="1"/>
<dbReference type="EMBL" id="AM920689">
    <property type="protein sequence ID" value="CAP50083.1"/>
    <property type="molecule type" value="Genomic_DNA"/>
</dbReference>
<dbReference type="SMR" id="B0RNP8"/>
<dbReference type="KEGG" id="xca:xcc-b100_0744"/>
<dbReference type="HOGENOM" id="CLU_035168_3_1_6"/>
<dbReference type="UniPathway" id="UPA00538">
    <property type="reaction ID" value="UER00592"/>
</dbReference>
<dbReference type="Proteomes" id="UP000001188">
    <property type="component" value="Chromosome"/>
</dbReference>
<dbReference type="GO" id="GO:0005737">
    <property type="term" value="C:cytoplasm"/>
    <property type="evidence" value="ECO:0007669"/>
    <property type="project" value="UniProtKB-SubCell"/>
</dbReference>
<dbReference type="GO" id="GO:0033819">
    <property type="term" value="F:lipoyl(octanoyl) transferase activity"/>
    <property type="evidence" value="ECO:0007669"/>
    <property type="project" value="UniProtKB-EC"/>
</dbReference>
<dbReference type="GO" id="GO:0036211">
    <property type="term" value="P:protein modification process"/>
    <property type="evidence" value="ECO:0007669"/>
    <property type="project" value="InterPro"/>
</dbReference>
<dbReference type="CDD" id="cd16444">
    <property type="entry name" value="LipB"/>
    <property type="match status" value="1"/>
</dbReference>
<dbReference type="FunFam" id="3.30.930.10:FF:000020">
    <property type="entry name" value="Octanoyltransferase"/>
    <property type="match status" value="1"/>
</dbReference>
<dbReference type="Gene3D" id="3.30.930.10">
    <property type="entry name" value="Bira Bifunctional Protein, Domain 2"/>
    <property type="match status" value="1"/>
</dbReference>
<dbReference type="HAMAP" id="MF_00013">
    <property type="entry name" value="LipB"/>
    <property type="match status" value="1"/>
</dbReference>
<dbReference type="InterPro" id="IPR045864">
    <property type="entry name" value="aa-tRNA-synth_II/BPL/LPL"/>
</dbReference>
<dbReference type="InterPro" id="IPR004143">
    <property type="entry name" value="BPL_LPL_catalytic"/>
</dbReference>
<dbReference type="InterPro" id="IPR000544">
    <property type="entry name" value="Octanoyltransferase"/>
</dbReference>
<dbReference type="InterPro" id="IPR020605">
    <property type="entry name" value="Octanoyltransferase_CS"/>
</dbReference>
<dbReference type="NCBIfam" id="TIGR00214">
    <property type="entry name" value="lipB"/>
    <property type="match status" value="1"/>
</dbReference>
<dbReference type="NCBIfam" id="NF010922">
    <property type="entry name" value="PRK14342.1"/>
    <property type="match status" value="1"/>
</dbReference>
<dbReference type="NCBIfam" id="NF010925">
    <property type="entry name" value="PRK14345.1"/>
    <property type="match status" value="1"/>
</dbReference>
<dbReference type="PANTHER" id="PTHR10993:SF7">
    <property type="entry name" value="LIPOYLTRANSFERASE 2, MITOCHONDRIAL-RELATED"/>
    <property type="match status" value="1"/>
</dbReference>
<dbReference type="PANTHER" id="PTHR10993">
    <property type="entry name" value="OCTANOYLTRANSFERASE"/>
    <property type="match status" value="1"/>
</dbReference>
<dbReference type="Pfam" id="PF21948">
    <property type="entry name" value="LplA-B_cat"/>
    <property type="match status" value="1"/>
</dbReference>
<dbReference type="PIRSF" id="PIRSF016262">
    <property type="entry name" value="LPLase"/>
    <property type="match status" value="1"/>
</dbReference>
<dbReference type="SUPFAM" id="SSF55681">
    <property type="entry name" value="Class II aaRS and biotin synthetases"/>
    <property type="match status" value="1"/>
</dbReference>
<dbReference type="PROSITE" id="PS51733">
    <property type="entry name" value="BPL_LPL_CATALYTIC"/>
    <property type="match status" value="1"/>
</dbReference>
<dbReference type="PROSITE" id="PS01313">
    <property type="entry name" value="LIPB"/>
    <property type="match status" value="1"/>
</dbReference>
<organism>
    <name type="scientific">Xanthomonas campestris pv. campestris (strain B100)</name>
    <dbReference type="NCBI Taxonomy" id="509169"/>
    <lineage>
        <taxon>Bacteria</taxon>
        <taxon>Pseudomonadati</taxon>
        <taxon>Pseudomonadota</taxon>
        <taxon>Gammaproteobacteria</taxon>
        <taxon>Lysobacterales</taxon>
        <taxon>Lysobacteraceae</taxon>
        <taxon>Xanthomonas</taxon>
    </lineage>
</organism>
<accession>B0RNP8</accession>
<comment type="function">
    <text evidence="1">Catalyzes the transfer of endogenously produced octanoic acid from octanoyl-acyl-carrier-protein onto the lipoyl domains of lipoate-dependent enzymes. Lipoyl-ACP can also act as a substrate although octanoyl-ACP is likely to be the physiological substrate.</text>
</comment>
<comment type="catalytic activity">
    <reaction evidence="1">
        <text>octanoyl-[ACP] + L-lysyl-[protein] = N(6)-octanoyl-L-lysyl-[protein] + holo-[ACP] + H(+)</text>
        <dbReference type="Rhea" id="RHEA:17665"/>
        <dbReference type="Rhea" id="RHEA-COMP:9636"/>
        <dbReference type="Rhea" id="RHEA-COMP:9685"/>
        <dbReference type="Rhea" id="RHEA-COMP:9752"/>
        <dbReference type="Rhea" id="RHEA-COMP:9928"/>
        <dbReference type="ChEBI" id="CHEBI:15378"/>
        <dbReference type="ChEBI" id="CHEBI:29969"/>
        <dbReference type="ChEBI" id="CHEBI:64479"/>
        <dbReference type="ChEBI" id="CHEBI:78463"/>
        <dbReference type="ChEBI" id="CHEBI:78809"/>
        <dbReference type="EC" id="2.3.1.181"/>
    </reaction>
</comment>
<comment type="pathway">
    <text evidence="1">Protein modification; protein lipoylation via endogenous pathway; protein N(6)-(lipoyl)lysine from octanoyl-[acyl-carrier-protein]: step 1/2.</text>
</comment>
<comment type="subcellular location">
    <subcellularLocation>
        <location evidence="1">Cytoplasm</location>
    </subcellularLocation>
</comment>
<comment type="miscellaneous">
    <text evidence="1">In the reaction, the free carboxyl group of octanoic acid is attached via an amide linkage to the epsilon-amino group of a specific lysine residue of lipoyl domains of lipoate-dependent enzymes.</text>
</comment>
<comment type="similarity">
    <text evidence="1">Belongs to the LipB family.</text>
</comment>
<sequence>MDAVAAEPVVAPVLPLPAQVRDLGMQDYVPVWRAMQRFTDTRDEHTGDELWVVEHAPVFTLGQAGKPEHVLAPGEIPVLQVDRGGQVTYHGPGQLVVYPLLDLRRLRIGVRDYVCKIEQALIDTLGEWNIIAERRDGAPGVYVGGAKIAALGIRVRRGCTFHGLSFNVAMDLEPFHRINPCGYQGLQVTSVLDLGGPSGMDAVKAVLLDQLARQFGLVLQPTSALPDLSLPA</sequence>
<gene>
    <name evidence="1" type="primary">lipB</name>
    <name type="ordered locus">xcc-b100_0744</name>
</gene>